<dbReference type="EC" id="2.7.7.27" evidence="1"/>
<dbReference type="EMBL" id="AF033856">
    <property type="protein sequence ID" value="AAD03473.1"/>
    <property type="molecule type" value="Genomic_DNA"/>
</dbReference>
<dbReference type="PDB" id="3BRK">
    <property type="method" value="X-ray"/>
    <property type="resolution" value="2.10 A"/>
    <property type="chains" value="X=1-420"/>
</dbReference>
<dbReference type="PDB" id="5W5R">
    <property type="method" value="X-ray"/>
    <property type="resolution" value="1.75 A"/>
    <property type="chains" value="A/B/C/D/E/F/G/H/I/J/K/L/M/N/O/P/Q/R/T/U=6-420"/>
</dbReference>
<dbReference type="PDB" id="5W5T">
    <property type="method" value="X-ray"/>
    <property type="resolution" value="1.76 A"/>
    <property type="chains" value="A/B/C/D/E/F/G/H/I/J/K/L/M/N/O/P/Q/R/T/Z=6-420"/>
</dbReference>
<dbReference type="PDB" id="5W6J">
    <property type="method" value="X-ray"/>
    <property type="resolution" value="1.78 A"/>
    <property type="chains" value="A/B/C/D/E/F/G/H/I/J/K/L/M/N/O/P/Q/R/T/U=1-420"/>
</dbReference>
<dbReference type="PDB" id="6VR0">
    <property type="method" value="X-ray"/>
    <property type="resolution" value="2.20 A"/>
    <property type="chains" value="A/B/C/D/E/F/G/H/I/J=6-418"/>
</dbReference>
<dbReference type="PDBsum" id="3BRK"/>
<dbReference type="PDBsum" id="5W5R"/>
<dbReference type="PDBsum" id="5W5T"/>
<dbReference type="PDBsum" id="5W6J"/>
<dbReference type="PDBsum" id="6VR0"/>
<dbReference type="SMR" id="P39669"/>
<dbReference type="eggNOG" id="COG0448">
    <property type="taxonomic scope" value="Bacteria"/>
</dbReference>
<dbReference type="BRENDA" id="2.7.7.27">
    <property type="organism ID" value="200"/>
</dbReference>
<dbReference type="UniPathway" id="UPA00164"/>
<dbReference type="EvolutionaryTrace" id="P39669"/>
<dbReference type="GO" id="GO:0005524">
    <property type="term" value="F:ATP binding"/>
    <property type="evidence" value="ECO:0007669"/>
    <property type="project" value="UniProtKB-KW"/>
</dbReference>
<dbReference type="GO" id="GO:0008878">
    <property type="term" value="F:glucose-1-phosphate adenylyltransferase activity"/>
    <property type="evidence" value="ECO:0007669"/>
    <property type="project" value="UniProtKB-UniRule"/>
</dbReference>
<dbReference type="GO" id="GO:0005978">
    <property type="term" value="P:glycogen biosynthetic process"/>
    <property type="evidence" value="ECO:0007669"/>
    <property type="project" value="UniProtKB-UniRule"/>
</dbReference>
<dbReference type="CDD" id="cd02508">
    <property type="entry name" value="ADP_Glucose_PP"/>
    <property type="match status" value="1"/>
</dbReference>
<dbReference type="CDD" id="cd04651">
    <property type="entry name" value="LbH_G1P_AT_C"/>
    <property type="match status" value="1"/>
</dbReference>
<dbReference type="Gene3D" id="2.160.10.10">
    <property type="entry name" value="Hexapeptide repeat proteins"/>
    <property type="match status" value="1"/>
</dbReference>
<dbReference type="Gene3D" id="3.90.550.10">
    <property type="entry name" value="Spore Coat Polysaccharide Biosynthesis Protein SpsA, Chain A"/>
    <property type="match status" value="1"/>
</dbReference>
<dbReference type="HAMAP" id="MF_00624">
    <property type="entry name" value="GlgC"/>
    <property type="match status" value="1"/>
</dbReference>
<dbReference type="InterPro" id="IPR011831">
    <property type="entry name" value="ADP-Glc_PPase"/>
</dbReference>
<dbReference type="InterPro" id="IPR005836">
    <property type="entry name" value="ADP_Glu_pyroP_CS"/>
</dbReference>
<dbReference type="InterPro" id="IPR023049">
    <property type="entry name" value="GlgC_bac"/>
</dbReference>
<dbReference type="InterPro" id="IPR056818">
    <property type="entry name" value="GlmU/GlgC-like_hexapep"/>
</dbReference>
<dbReference type="InterPro" id="IPR005835">
    <property type="entry name" value="NTP_transferase_dom"/>
</dbReference>
<dbReference type="InterPro" id="IPR029044">
    <property type="entry name" value="Nucleotide-diphossugar_trans"/>
</dbReference>
<dbReference type="InterPro" id="IPR011004">
    <property type="entry name" value="Trimer_LpxA-like_sf"/>
</dbReference>
<dbReference type="NCBIfam" id="TIGR02091">
    <property type="entry name" value="glgC"/>
    <property type="match status" value="1"/>
</dbReference>
<dbReference type="NCBIfam" id="NF001947">
    <property type="entry name" value="PRK00725.1"/>
    <property type="match status" value="1"/>
</dbReference>
<dbReference type="NCBIfam" id="NF002023">
    <property type="entry name" value="PRK00844.1"/>
    <property type="match status" value="1"/>
</dbReference>
<dbReference type="PANTHER" id="PTHR43523:SF2">
    <property type="entry name" value="GLUCOSE-1-PHOSPHATE ADENYLYLTRANSFERASE"/>
    <property type="match status" value="1"/>
</dbReference>
<dbReference type="PANTHER" id="PTHR43523">
    <property type="entry name" value="GLUCOSE-1-PHOSPHATE ADENYLYLTRANSFERASE-RELATED"/>
    <property type="match status" value="1"/>
</dbReference>
<dbReference type="Pfam" id="PF24894">
    <property type="entry name" value="Hexapep_GlmU"/>
    <property type="match status" value="1"/>
</dbReference>
<dbReference type="Pfam" id="PF00483">
    <property type="entry name" value="NTP_transferase"/>
    <property type="match status" value="1"/>
</dbReference>
<dbReference type="SUPFAM" id="SSF53448">
    <property type="entry name" value="Nucleotide-diphospho-sugar transferases"/>
    <property type="match status" value="1"/>
</dbReference>
<dbReference type="SUPFAM" id="SSF51161">
    <property type="entry name" value="Trimeric LpxA-like enzymes"/>
    <property type="match status" value="1"/>
</dbReference>
<dbReference type="PROSITE" id="PS00808">
    <property type="entry name" value="ADP_GLC_PYROPHOSPH_1"/>
    <property type="match status" value="1"/>
</dbReference>
<dbReference type="PROSITE" id="PS00809">
    <property type="entry name" value="ADP_GLC_PYROPHOSPH_2"/>
    <property type="match status" value="1"/>
</dbReference>
<dbReference type="PROSITE" id="PS00810">
    <property type="entry name" value="ADP_GLC_PYROPHOSPH_3"/>
    <property type="match status" value="1"/>
</dbReference>
<name>GLGC_RHIRD</name>
<proteinExistence type="evidence at protein level"/>
<evidence type="ECO:0000255" key="1">
    <source>
        <dbReference type="HAMAP-Rule" id="MF_00624"/>
    </source>
</evidence>
<evidence type="ECO:0007829" key="2">
    <source>
        <dbReference type="PDB" id="5W5R"/>
    </source>
</evidence>
<evidence type="ECO:0007829" key="3">
    <source>
        <dbReference type="PDB" id="5W6J"/>
    </source>
</evidence>
<evidence type="ECO:0007829" key="4">
    <source>
        <dbReference type="PDB" id="6VR0"/>
    </source>
</evidence>
<reference key="1">
    <citation type="journal article" date="1994" name="Gene">
        <title>A chromosomal cluster of genes encoding ADP-glucose synthetase, glycogen synthase and phosphoglucomutase in Agrobacterium tumefaciens.</title>
        <authorList>
            <person name="Uttaro A.D."/>
            <person name="Ugalde R.A."/>
        </authorList>
    </citation>
    <scope>NUCLEOTIDE SEQUENCE [GENOMIC DNA]</scope>
    <source>
        <strain>A348</strain>
    </source>
</reference>
<sequence length="420" mass="47029">MSEKRVQPLARDAMAYVLAGGRGSRLKELTDRRAKPAVYFGGKARIIDFALSNALNSGIRRIGVATQYKAHSLIRHLQRGWDFFRPERNESFDILPASQRVSETQWYEGTADAVYQNIDIIEPYAPEYMVILAGDHIYKMDYEYMLQQHVDSGADVTIGCLEVPRMEATGFGVMHVNEKDEIIDFIEKPADPPGIPGNEGFALASMGIYVFHTKFLMEAVRRDAADPTSSRDFGKDIIPYIVEHGKAVAHRFADSCVRSDFEHEPYWRDVGTIDAYWQANIDLTDVVPDLDIYDKSWPIWTYAEITPPAKFVHDDEDRRGSAVSSVVSGDCIISGAALNRSLLFTGVRANSYSRLENAVVLPSVKIGRHAQLSNVVIDHGVVIPEGLIVGEDPELDAKRFRRTESGICLITQSMIDKLDL</sequence>
<keyword id="KW-0002">3D-structure</keyword>
<keyword id="KW-0067">ATP-binding</keyword>
<keyword id="KW-0119">Carbohydrate metabolism</keyword>
<keyword id="KW-0320">Glycogen biosynthesis</keyword>
<keyword id="KW-0321">Glycogen metabolism</keyword>
<keyword id="KW-0547">Nucleotide-binding</keyword>
<keyword id="KW-0548">Nucleotidyltransferase</keyword>
<keyword id="KW-0808">Transferase</keyword>
<feature type="chain" id="PRO_0000195272" description="Glucose-1-phosphate adenylyltransferase">
    <location>
        <begin position="1"/>
        <end position="420"/>
    </location>
</feature>
<feature type="binding site" evidence="1">
    <location>
        <position position="107"/>
    </location>
    <ligand>
        <name>alpha-D-glucose 1-phosphate</name>
        <dbReference type="ChEBI" id="CHEBI:58601"/>
    </ligand>
</feature>
<feature type="binding site" evidence="1">
    <location>
        <position position="172"/>
    </location>
    <ligand>
        <name>alpha-D-glucose 1-phosphate</name>
        <dbReference type="ChEBI" id="CHEBI:58601"/>
    </ligand>
</feature>
<feature type="binding site" evidence="1">
    <location>
        <begin position="187"/>
        <end position="188"/>
    </location>
    <ligand>
        <name>alpha-D-glucose 1-phosphate</name>
        <dbReference type="ChEBI" id="CHEBI:58601"/>
    </ligand>
</feature>
<feature type="binding site" evidence="1">
    <location>
        <position position="205"/>
    </location>
    <ligand>
        <name>alpha-D-glucose 1-phosphate</name>
        <dbReference type="ChEBI" id="CHEBI:58601"/>
    </ligand>
</feature>
<feature type="strand" evidence="3">
    <location>
        <begin position="5"/>
        <end position="7"/>
    </location>
</feature>
<feature type="helix" evidence="2">
    <location>
        <begin position="9"/>
        <end position="12"/>
    </location>
</feature>
<feature type="strand" evidence="2">
    <location>
        <begin position="13"/>
        <end position="18"/>
    </location>
</feature>
<feature type="helix" evidence="2">
    <location>
        <begin position="24"/>
        <end position="30"/>
    </location>
</feature>
<feature type="strand" evidence="2">
    <location>
        <begin position="31"/>
        <end position="33"/>
    </location>
</feature>
<feature type="helix" evidence="2">
    <location>
        <begin position="35"/>
        <end position="37"/>
    </location>
</feature>
<feature type="strand" evidence="2">
    <location>
        <begin position="38"/>
        <end position="40"/>
    </location>
</feature>
<feature type="turn" evidence="2">
    <location>
        <begin position="41"/>
        <end position="43"/>
    </location>
</feature>
<feature type="helix" evidence="2">
    <location>
        <begin position="48"/>
        <end position="56"/>
    </location>
</feature>
<feature type="strand" evidence="2">
    <location>
        <begin position="61"/>
        <end position="65"/>
    </location>
</feature>
<feature type="helix" evidence="2">
    <location>
        <begin position="71"/>
        <end position="80"/>
    </location>
</feature>
<feature type="helix" evidence="2">
    <location>
        <begin position="86"/>
        <end position="88"/>
    </location>
</feature>
<feature type="strand" evidence="2">
    <location>
        <begin position="91"/>
        <end position="95"/>
    </location>
</feature>
<feature type="strand" evidence="2">
    <location>
        <begin position="108"/>
        <end position="111"/>
    </location>
</feature>
<feature type="helix" evidence="2">
    <location>
        <begin position="112"/>
        <end position="115"/>
    </location>
</feature>
<feature type="helix" evidence="2">
    <location>
        <begin position="118"/>
        <end position="121"/>
    </location>
</feature>
<feature type="turn" evidence="2">
    <location>
        <begin position="122"/>
        <end position="124"/>
    </location>
</feature>
<feature type="strand" evidence="2">
    <location>
        <begin position="127"/>
        <end position="135"/>
    </location>
</feature>
<feature type="helix" evidence="2">
    <location>
        <begin position="142"/>
        <end position="152"/>
    </location>
</feature>
<feature type="strand" evidence="2">
    <location>
        <begin position="155"/>
        <end position="164"/>
    </location>
</feature>
<feature type="helix" evidence="2">
    <location>
        <begin position="167"/>
        <end position="170"/>
    </location>
</feature>
<feature type="strand" evidence="2">
    <location>
        <begin position="171"/>
        <end position="176"/>
    </location>
</feature>
<feature type="strand" evidence="2">
    <location>
        <begin position="181"/>
        <end position="188"/>
    </location>
</feature>
<feature type="strand" evidence="2">
    <location>
        <begin position="201"/>
        <end position="212"/>
    </location>
</feature>
<feature type="helix" evidence="2">
    <location>
        <begin position="213"/>
        <end position="224"/>
    </location>
</feature>
<feature type="turn" evidence="2">
    <location>
        <begin position="233"/>
        <end position="236"/>
    </location>
</feature>
<feature type="helix" evidence="2">
    <location>
        <begin position="237"/>
        <end position="244"/>
    </location>
</feature>
<feature type="strand" evidence="2">
    <location>
        <begin position="247"/>
        <end position="251"/>
    </location>
</feature>
<feature type="helix" evidence="2">
    <location>
        <begin position="252"/>
        <end position="255"/>
    </location>
</feature>
<feature type="helix" evidence="2">
    <location>
        <begin position="273"/>
        <end position="281"/>
    </location>
</feature>
<feature type="helix" evidence="2">
    <location>
        <begin position="282"/>
        <end position="284"/>
    </location>
</feature>
<feature type="strand" evidence="2">
    <location>
        <begin position="285"/>
        <end position="287"/>
    </location>
</feature>
<feature type="strand" evidence="4">
    <location>
        <begin position="295"/>
        <end position="297"/>
    </location>
</feature>
<feature type="strand" evidence="2">
    <location>
        <begin position="309"/>
        <end position="312"/>
    </location>
</feature>
<feature type="strand" evidence="2">
    <location>
        <begin position="314"/>
        <end position="317"/>
    </location>
</feature>
<feature type="strand" evidence="2">
    <location>
        <begin position="321"/>
        <end position="327"/>
    </location>
</feature>
<feature type="strand" evidence="2">
    <location>
        <begin position="332"/>
        <end position="335"/>
    </location>
</feature>
<feature type="strand" evidence="2">
    <location>
        <begin position="337"/>
        <end position="340"/>
    </location>
</feature>
<feature type="strand" evidence="2">
    <location>
        <begin position="354"/>
        <end position="360"/>
    </location>
</feature>
<feature type="strand" evidence="2">
    <location>
        <begin position="371"/>
        <end position="377"/>
    </location>
</feature>
<feature type="strand" evidence="2">
    <location>
        <begin position="388"/>
        <end position="391"/>
    </location>
</feature>
<feature type="helix" evidence="2">
    <location>
        <begin position="393"/>
        <end position="399"/>
    </location>
</feature>
<feature type="strand" evidence="2">
    <location>
        <begin position="400"/>
        <end position="402"/>
    </location>
</feature>
<feature type="strand" evidence="2">
    <location>
        <begin position="408"/>
        <end position="410"/>
    </location>
</feature>
<feature type="helix" evidence="2">
    <location>
        <begin position="412"/>
        <end position="416"/>
    </location>
</feature>
<organism>
    <name type="scientific">Rhizobium radiobacter</name>
    <name type="common">Agrobacterium tumefaciens</name>
    <name type="synonym">Agrobacterium radiobacter</name>
    <dbReference type="NCBI Taxonomy" id="358"/>
    <lineage>
        <taxon>Bacteria</taxon>
        <taxon>Pseudomonadati</taxon>
        <taxon>Pseudomonadota</taxon>
        <taxon>Alphaproteobacteria</taxon>
        <taxon>Hyphomicrobiales</taxon>
        <taxon>Rhizobiaceae</taxon>
        <taxon>Rhizobium/Agrobacterium group</taxon>
        <taxon>Agrobacterium</taxon>
        <taxon>Agrobacterium tumefaciens complex</taxon>
    </lineage>
</organism>
<gene>
    <name evidence="1" type="primary">glgC</name>
</gene>
<accession>P39669</accession>
<comment type="function">
    <text evidence="1">Involved in the biosynthesis of ADP-glucose, a building block required for the elongation reactions to produce glycogen. Catalyzes the reaction between ATP and alpha-D-glucose 1-phosphate (G1P) to produce pyrophosphate and ADP-Glc.</text>
</comment>
<comment type="catalytic activity">
    <reaction evidence="1">
        <text>alpha-D-glucose 1-phosphate + ATP + H(+) = ADP-alpha-D-glucose + diphosphate</text>
        <dbReference type="Rhea" id="RHEA:12120"/>
        <dbReference type="ChEBI" id="CHEBI:15378"/>
        <dbReference type="ChEBI" id="CHEBI:30616"/>
        <dbReference type="ChEBI" id="CHEBI:33019"/>
        <dbReference type="ChEBI" id="CHEBI:57498"/>
        <dbReference type="ChEBI" id="CHEBI:58601"/>
        <dbReference type="EC" id="2.7.7.27"/>
    </reaction>
</comment>
<comment type="pathway">
    <text evidence="1">Glycan biosynthesis; glycogen biosynthesis.</text>
</comment>
<comment type="subunit">
    <text evidence="1">Homotetramer.</text>
</comment>
<comment type="similarity">
    <text evidence="1">Belongs to the bacterial/plant glucose-1-phosphate adenylyltransferase family.</text>
</comment>
<protein>
    <recommendedName>
        <fullName evidence="1">Glucose-1-phosphate adenylyltransferase</fullName>
        <ecNumber evidence="1">2.7.7.27</ecNumber>
    </recommendedName>
    <alternativeName>
        <fullName evidence="1">ADP-glucose pyrophosphorylase</fullName>
        <shortName evidence="1">ADPGlc PPase</shortName>
    </alternativeName>
    <alternativeName>
        <fullName evidence="1">ADP-glucose synthase</fullName>
    </alternativeName>
</protein>